<reference key="1">
    <citation type="submission" date="2008-12" db="EMBL/GenBank/DDBJ databases">
        <title>Complete sequence of chromosome of Methylobacterium chloromethanicum CM4.</title>
        <authorList>
            <consortium name="US DOE Joint Genome Institute"/>
            <person name="Lucas S."/>
            <person name="Copeland A."/>
            <person name="Lapidus A."/>
            <person name="Glavina del Rio T."/>
            <person name="Dalin E."/>
            <person name="Tice H."/>
            <person name="Bruce D."/>
            <person name="Goodwin L."/>
            <person name="Pitluck S."/>
            <person name="Chertkov O."/>
            <person name="Brettin T."/>
            <person name="Detter J.C."/>
            <person name="Han C."/>
            <person name="Larimer F."/>
            <person name="Land M."/>
            <person name="Hauser L."/>
            <person name="Kyrpides N."/>
            <person name="Mikhailova N."/>
            <person name="Marx C."/>
            <person name="Richardson P."/>
        </authorList>
    </citation>
    <scope>NUCLEOTIDE SEQUENCE [LARGE SCALE GENOMIC DNA]</scope>
    <source>
        <strain>CM4 / NCIMB 13688</strain>
    </source>
</reference>
<protein>
    <recommendedName>
        <fullName evidence="1">Chaperone protein HtpG</fullName>
    </recommendedName>
    <alternativeName>
        <fullName evidence="1">Heat shock protein HtpG</fullName>
    </alternativeName>
    <alternativeName>
        <fullName evidence="1">High temperature protein G</fullName>
    </alternativeName>
</protein>
<feature type="chain" id="PRO_1000146007" description="Chaperone protein HtpG">
    <location>
        <begin position="1"/>
        <end position="626"/>
    </location>
</feature>
<feature type="region of interest" description="A; substrate-binding" evidence="1">
    <location>
        <begin position="1"/>
        <end position="331"/>
    </location>
</feature>
<feature type="region of interest" description="B" evidence="1">
    <location>
        <begin position="332"/>
        <end position="544"/>
    </location>
</feature>
<feature type="region of interest" description="C" evidence="1">
    <location>
        <begin position="545"/>
        <end position="626"/>
    </location>
</feature>
<evidence type="ECO:0000255" key="1">
    <source>
        <dbReference type="HAMAP-Rule" id="MF_00505"/>
    </source>
</evidence>
<keyword id="KW-0067">ATP-binding</keyword>
<keyword id="KW-0143">Chaperone</keyword>
<keyword id="KW-0963">Cytoplasm</keyword>
<keyword id="KW-0547">Nucleotide-binding</keyword>
<keyword id="KW-0346">Stress response</keyword>
<dbReference type="EMBL" id="CP001298">
    <property type="protein sequence ID" value="ACK82043.1"/>
    <property type="molecule type" value="Genomic_DNA"/>
</dbReference>
<dbReference type="RefSeq" id="WP_012606035.1">
    <property type="nucleotide sequence ID" value="NC_011757.1"/>
</dbReference>
<dbReference type="SMR" id="B7KPG0"/>
<dbReference type="KEGG" id="mch:Mchl_1155"/>
<dbReference type="HOGENOM" id="CLU_006684_3_0_5"/>
<dbReference type="Proteomes" id="UP000002385">
    <property type="component" value="Chromosome"/>
</dbReference>
<dbReference type="GO" id="GO:0005737">
    <property type="term" value="C:cytoplasm"/>
    <property type="evidence" value="ECO:0007669"/>
    <property type="project" value="UniProtKB-SubCell"/>
</dbReference>
<dbReference type="GO" id="GO:0005524">
    <property type="term" value="F:ATP binding"/>
    <property type="evidence" value="ECO:0007669"/>
    <property type="project" value="UniProtKB-UniRule"/>
</dbReference>
<dbReference type="GO" id="GO:0016887">
    <property type="term" value="F:ATP hydrolysis activity"/>
    <property type="evidence" value="ECO:0007669"/>
    <property type="project" value="InterPro"/>
</dbReference>
<dbReference type="GO" id="GO:0140662">
    <property type="term" value="F:ATP-dependent protein folding chaperone"/>
    <property type="evidence" value="ECO:0007669"/>
    <property type="project" value="InterPro"/>
</dbReference>
<dbReference type="GO" id="GO:0051082">
    <property type="term" value="F:unfolded protein binding"/>
    <property type="evidence" value="ECO:0007669"/>
    <property type="project" value="UniProtKB-UniRule"/>
</dbReference>
<dbReference type="CDD" id="cd16927">
    <property type="entry name" value="HATPase_Hsp90-like"/>
    <property type="match status" value="1"/>
</dbReference>
<dbReference type="FunFam" id="3.30.565.10:FF:000357">
    <property type="entry name" value="Heat shock protein HSP 90-beta"/>
    <property type="match status" value="1"/>
</dbReference>
<dbReference type="Gene3D" id="3.30.230.80">
    <property type="match status" value="1"/>
</dbReference>
<dbReference type="Gene3D" id="3.40.50.11260">
    <property type="match status" value="1"/>
</dbReference>
<dbReference type="Gene3D" id="1.20.120.790">
    <property type="entry name" value="Heat shock protein 90, C-terminal domain"/>
    <property type="match status" value="1"/>
</dbReference>
<dbReference type="Gene3D" id="3.30.565.10">
    <property type="entry name" value="Histidine kinase-like ATPase, C-terminal domain"/>
    <property type="match status" value="1"/>
</dbReference>
<dbReference type="HAMAP" id="MF_00505">
    <property type="entry name" value="HSP90"/>
    <property type="match status" value="1"/>
</dbReference>
<dbReference type="InterPro" id="IPR036890">
    <property type="entry name" value="HATPase_C_sf"/>
</dbReference>
<dbReference type="InterPro" id="IPR019805">
    <property type="entry name" value="Heat_shock_protein_90_CS"/>
</dbReference>
<dbReference type="InterPro" id="IPR037196">
    <property type="entry name" value="HSP90_C"/>
</dbReference>
<dbReference type="InterPro" id="IPR001404">
    <property type="entry name" value="Hsp90_fam"/>
</dbReference>
<dbReference type="InterPro" id="IPR020575">
    <property type="entry name" value="Hsp90_N"/>
</dbReference>
<dbReference type="InterPro" id="IPR020568">
    <property type="entry name" value="Ribosomal_Su5_D2-typ_SF"/>
</dbReference>
<dbReference type="NCBIfam" id="NF003555">
    <property type="entry name" value="PRK05218.1"/>
    <property type="match status" value="1"/>
</dbReference>
<dbReference type="PANTHER" id="PTHR11528">
    <property type="entry name" value="HEAT SHOCK PROTEIN 90 FAMILY MEMBER"/>
    <property type="match status" value="1"/>
</dbReference>
<dbReference type="Pfam" id="PF13589">
    <property type="entry name" value="HATPase_c_3"/>
    <property type="match status" value="1"/>
</dbReference>
<dbReference type="Pfam" id="PF00183">
    <property type="entry name" value="HSP90"/>
    <property type="match status" value="1"/>
</dbReference>
<dbReference type="PIRSF" id="PIRSF002583">
    <property type="entry name" value="Hsp90"/>
    <property type="match status" value="1"/>
</dbReference>
<dbReference type="PRINTS" id="PR00775">
    <property type="entry name" value="HEATSHOCK90"/>
</dbReference>
<dbReference type="SUPFAM" id="SSF55874">
    <property type="entry name" value="ATPase domain of HSP90 chaperone/DNA topoisomerase II/histidine kinase"/>
    <property type="match status" value="1"/>
</dbReference>
<dbReference type="SUPFAM" id="SSF110942">
    <property type="entry name" value="HSP90 C-terminal domain"/>
    <property type="match status" value="1"/>
</dbReference>
<dbReference type="SUPFAM" id="SSF54211">
    <property type="entry name" value="Ribosomal protein S5 domain 2-like"/>
    <property type="match status" value="1"/>
</dbReference>
<dbReference type="PROSITE" id="PS00298">
    <property type="entry name" value="HSP90"/>
    <property type="match status" value="1"/>
</dbReference>
<proteinExistence type="inferred from homology"/>
<comment type="function">
    <text evidence="1">Molecular chaperone. Has ATPase activity.</text>
</comment>
<comment type="subunit">
    <text evidence="1">Homodimer.</text>
</comment>
<comment type="subcellular location">
    <subcellularLocation>
        <location evidence="1">Cytoplasm</location>
    </subcellularLocation>
</comment>
<comment type="similarity">
    <text evidence="1">Belongs to the heat shock protein 90 family.</text>
</comment>
<organism>
    <name type="scientific">Methylorubrum extorquens (strain CM4 / NCIMB 13688)</name>
    <name type="common">Methylobacterium extorquens</name>
    <dbReference type="NCBI Taxonomy" id="440085"/>
    <lineage>
        <taxon>Bacteria</taxon>
        <taxon>Pseudomonadati</taxon>
        <taxon>Pseudomonadota</taxon>
        <taxon>Alphaproteobacteria</taxon>
        <taxon>Hyphomicrobiales</taxon>
        <taxon>Methylobacteriaceae</taxon>
        <taxon>Methylorubrum</taxon>
    </lineage>
</organism>
<sequence>MSETVERHEFGAEVGRLLDLVVHALYSDREIFLRELVANAADATDRRRFEALTNEALALPSDARVLIAPDKAARTLTISDAGIGMSKEDLAQNLGTIARSGTRAFSQALGERAAEGGEDQRPSLIGQFGVGFYSAFMVADRVTVTSRRAGSEEAWTWASDGKGSYTLEPASREQPGTDIVLHMKEDADEYLESYRLDHVVRKWADNIAVPIAIRDAEGKEEAANRGTALWRKPKSEITEEQYKEFYRTVSHGFDEPWATLHWRAEGALEFTGLLFVPSMKPFMPMEDDRRSKVRLHVRRMFITDEAELLPNWLRFVHGVVDTDDLPLNVSREMLQSTPTLQKIRRAVTTRVINELSSRSKNTEKAEEYQKFFENFGPVLKEGIYEDFERRAEIAPLLRFRSSTEGGWTSLPEYVARMKPEQEAIYYLVADDVEALKNSAQLEGFRARRVEVLLLSDHVDAFWPEQLGKFEDKPLRSVTQGSADLAKLKPEGETAEAAPALDTLVAALKLALEPDVSDVRTTDRLVDSAVVLATSGMGPDLQMQRLLRRAGRGFGGSAPILEINPRHALIRSLNERAEAGEDLKAEAGTLLDLARVQDGDTPRDPVAFARAVAAALAGTAAKPAGSA</sequence>
<accession>B7KPG0</accession>
<name>HTPG_METC4</name>
<gene>
    <name evidence="1" type="primary">htpG</name>
    <name type="ordered locus">Mchl_1155</name>
</gene>